<reference key="1">
    <citation type="submission" date="2005-12" db="EMBL/GenBank/DDBJ databases">
        <title>The NIAID influenza genome sequencing project.</title>
        <authorList>
            <person name="Ghedin E."/>
            <person name="Spiro D."/>
            <person name="Miller N."/>
            <person name="Zaborsky J."/>
            <person name="Feldblyum T."/>
            <person name="Subbu V."/>
            <person name="Shumway M."/>
            <person name="Sparenborg J."/>
            <person name="Groveman L."/>
            <person name="Halpin R."/>
            <person name="Sitz J."/>
            <person name="Koo H."/>
            <person name="Salzberg S.L."/>
            <person name="Webster R.G."/>
            <person name="Hoffmann E."/>
            <person name="Krauss S."/>
            <person name="Naeve C."/>
            <person name="Bao Y."/>
            <person name="Bolotov P."/>
            <person name="Dernovoy D."/>
            <person name="Kiryutin B."/>
            <person name="Lipman D.J."/>
            <person name="Tatusova T."/>
        </authorList>
    </citation>
    <scope>NUCLEOTIDE SEQUENCE [GENOMIC RNA]</scope>
</reference>
<dbReference type="EMBL" id="CY006695">
    <property type="protein sequence ID" value="ABB96324.1"/>
    <property type="molecule type" value="Genomic_RNA"/>
</dbReference>
<dbReference type="SMR" id="Q2VNE7"/>
<dbReference type="Proteomes" id="UP000007555">
    <property type="component" value="Genome"/>
</dbReference>
<dbReference type="GO" id="GO:0030430">
    <property type="term" value="C:host cell cytoplasm"/>
    <property type="evidence" value="ECO:0007669"/>
    <property type="project" value="UniProtKB-SubCell"/>
</dbReference>
<dbReference type="GO" id="GO:0042025">
    <property type="term" value="C:host cell nucleus"/>
    <property type="evidence" value="ECO:0007669"/>
    <property type="project" value="UniProtKB-SubCell"/>
</dbReference>
<dbReference type="GO" id="GO:0030291">
    <property type="term" value="F:protein serine/threonine kinase inhibitor activity"/>
    <property type="evidence" value="ECO:0007669"/>
    <property type="project" value="UniProtKB-KW"/>
</dbReference>
<dbReference type="GO" id="GO:0003723">
    <property type="term" value="F:RNA binding"/>
    <property type="evidence" value="ECO:0007669"/>
    <property type="project" value="UniProtKB-KW"/>
</dbReference>
<dbReference type="GO" id="GO:0039540">
    <property type="term" value="P:symbiont-mediated suppression of host cytoplasmic pattern recognition receptor signaling pathway via inhibition of RIG-I activity"/>
    <property type="evidence" value="ECO:0007669"/>
    <property type="project" value="UniProtKB-KW"/>
</dbReference>
<dbReference type="GO" id="GO:0039657">
    <property type="term" value="P:symbiont-mediated suppression of host gene expression"/>
    <property type="evidence" value="ECO:0007669"/>
    <property type="project" value="UniProtKB-KW"/>
</dbReference>
<dbReference type="GO" id="GO:0039524">
    <property type="term" value="P:symbiont-mediated suppression of host mRNA processing"/>
    <property type="evidence" value="ECO:0007669"/>
    <property type="project" value="UniProtKB-KW"/>
</dbReference>
<dbReference type="GO" id="GO:0039580">
    <property type="term" value="P:symbiont-mediated suppression of host PKR/eIFalpha signaling"/>
    <property type="evidence" value="ECO:0007669"/>
    <property type="project" value="UniProtKB-KW"/>
</dbReference>
<dbReference type="GO" id="GO:0039502">
    <property type="term" value="P:symbiont-mediated suppression of host type I interferon-mediated signaling pathway"/>
    <property type="evidence" value="ECO:0007669"/>
    <property type="project" value="UniProtKB-KW"/>
</dbReference>
<dbReference type="FunFam" id="1.10.287.10:FF:000001">
    <property type="entry name" value="Non-structural protein 1"/>
    <property type="match status" value="1"/>
</dbReference>
<dbReference type="FunFam" id="3.30.420.330:FF:000001">
    <property type="entry name" value="Non-structural protein 1"/>
    <property type="match status" value="1"/>
</dbReference>
<dbReference type="Gene3D" id="3.30.420.330">
    <property type="entry name" value="Influenza virus non-structural protein, effector domain"/>
    <property type="match status" value="1"/>
</dbReference>
<dbReference type="Gene3D" id="1.10.287.10">
    <property type="entry name" value="S15/NS1, RNA-binding"/>
    <property type="match status" value="1"/>
</dbReference>
<dbReference type="HAMAP" id="MF_04066">
    <property type="entry name" value="INFV_NS1"/>
    <property type="match status" value="1"/>
</dbReference>
<dbReference type="InterPro" id="IPR004208">
    <property type="entry name" value="NS1"/>
</dbReference>
<dbReference type="InterPro" id="IPR000256">
    <property type="entry name" value="NS1A"/>
</dbReference>
<dbReference type="InterPro" id="IPR038064">
    <property type="entry name" value="NS1A_effect_dom-like_sf"/>
</dbReference>
<dbReference type="InterPro" id="IPR009068">
    <property type="entry name" value="uS15_NS1_RNA-bd_sf"/>
</dbReference>
<dbReference type="Pfam" id="PF00600">
    <property type="entry name" value="Flu_NS1"/>
    <property type="match status" value="1"/>
</dbReference>
<dbReference type="SUPFAM" id="SSF143021">
    <property type="entry name" value="Ns1 effector domain-like"/>
    <property type="match status" value="1"/>
</dbReference>
<dbReference type="SUPFAM" id="SSF47060">
    <property type="entry name" value="S15/NS1 RNA-binding domain"/>
    <property type="match status" value="1"/>
</dbReference>
<comment type="function">
    <text evidence="1">Inhibits post-transcriptional processing of cellular pre-mRNA, by binding and inhibiting two cellular proteins that are required for the 3'-end processing of cellular pre-mRNAs: the 30 kDa cleavage and polyadenylation specificity factor/CPSF4 and the poly(A)-binding protein 2/PABPN1. In turn, unprocessed 3' end pre-mRNAs accumulate in the host nucleus and are no longer exported to the cytoplasm. Cellular protein synthesis is thereby shut off very early after virus infection. Viral protein synthesis is not affected by the inhibition of the cellular 3' end processing machinery because the poly(A) tails of viral mRNAs are produced by the viral polymerase through a stuttering mechanism. Prevents the establishment of the cellular antiviral state by inhibiting TRIM25-mediated RIGI ubiquitination, which normally triggers the antiviral transduction signal that leads to the activation of type I IFN genes by transcription factors IRF3 and IRF7. Also binds poly(A) and U6 snRNA. Inhibits the integrated stress response (ISR) in the infected cell by blocking dsRNA binding by EIF2AK2/PKR and further phosphorylation of EIF2S1/EIF-2ALPHA. Stress granule formation is thus inhibited, which allows protein synthesis and viral replication.</text>
</comment>
<comment type="subunit">
    <text evidence="1">Homodimer. Interacts with host TRIM25 (via coiled coil); this interaction specifically inhibits TRIM25 multimerization and TRIM25-mediated RIGI CARD ubiquitination. Interacts with human EIF2AK2/PKR, CPSF4, IVNS1ABP and PABPN1.</text>
</comment>
<comment type="subcellular location">
    <subcellularLocation>
        <location evidence="1">Host nucleus</location>
    </subcellularLocation>
    <subcellularLocation>
        <location evidence="1">Host cytoplasm</location>
    </subcellularLocation>
    <text evidence="1">In uninfected, transfected cells, NS1 is localized in the nucleus. Only in virus infected cells, the nuclear export signal is unveiled, presumably by a viral protein, and a fraction of NS1 is exported in the cytoplasm.</text>
</comment>
<comment type="alternative products">
    <event type="alternative splicing"/>
    <isoform>
        <id>Q2VNE7-1</id>
        <name>NS1</name>
        <sequence type="displayed"/>
    </isoform>
    <isoform>
        <id>Q2VNE8-1</id>
        <name>NEP</name>
        <name>NS2</name>
        <sequence type="external"/>
    </isoform>
</comment>
<comment type="domain">
    <text evidence="1">The dsRNA-binding region is required for suppression of RNA silencing.</text>
</comment>
<comment type="PTM">
    <text evidence="1">Upon interferon induction, ISGylated via host HERC5; this results in the impairment of NS1 interaction with RNA targets due to its inability to form homodimers and to interact with host EIF2AK2/PKR.</text>
</comment>
<comment type="similarity">
    <text evidence="1">Belongs to the influenza A viruses NS1 family.</text>
</comment>
<organism>
    <name type="scientific">Influenza A virus (strain A/Memphis/2/1978 H3N2)</name>
    <dbReference type="NCBI Taxonomy" id="383580"/>
    <lineage>
        <taxon>Viruses</taxon>
        <taxon>Riboviria</taxon>
        <taxon>Orthornavirae</taxon>
        <taxon>Negarnaviricota</taxon>
        <taxon>Polyploviricotina</taxon>
        <taxon>Insthoviricetes</taxon>
        <taxon>Articulavirales</taxon>
        <taxon>Orthomyxoviridae</taxon>
        <taxon>Alphainfluenzavirus</taxon>
        <taxon>Alphainfluenzavirus influenzae</taxon>
        <taxon>Influenza A virus</taxon>
    </lineage>
</organism>
<sequence>MDSNTVSSFQVDCFLWHVRKQVVDQELGDAPFLDRLRRDQRSLRGRGSTLGLDIEAATHVGKQIVEKILKEESDEALKMSMASTPASRYITDMTIEELSRDWFMLMPKQKVEGPLCIRMDQAIMEKNIMLKANFSVIFDRLETLILLRAFTEEGAIVGEISPLLSFPGHTIEDVKNAIGVLIGGLEWNDNTVRVSKTLQRFAWGSSNENGGPPLTPKQKRKMARTARSKVRRDKMAD</sequence>
<name>NS1_I78A7</name>
<accession>Q2VNE7</accession>
<keyword id="KW-0025">Alternative splicing</keyword>
<keyword id="KW-1262">Eukaryotic host gene expression shutoff by virus</keyword>
<keyword id="KW-1035">Host cytoplasm</keyword>
<keyword id="KW-1190">Host gene expression shutoff by virus</keyword>
<keyword id="KW-1192">Host mRNA suppression by virus</keyword>
<keyword id="KW-1048">Host nucleus</keyword>
<keyword id="KW-0945">Host-virus interaction</keyword>
<keyword id="KW-1090">Inhibition of host innate immune response by virus</keyword>
<keyword id="KW-1114">Inhibition of host interferon signaling pathway by virus</keyword>
<keyword id="KW-1102">Inhibition of host PKR by virus</keyword>
<keyword id="KW-1103">Inhibition of host pre-mRNA processing by virus</keyword>
<keyword id="KW-1088">Inhibition of host RIG-I by virus</keyword>
<keyword id="KW-1113">Inhibition of host RLR pathway by virus</keyword>
<keyword id="KW-0922">Interferon antiviral system evasion</keyword>
<keyword id="KW-0694">RNA-binding</keyword>
<keyword id="KW-0832">Ubl conjugation</keyword>
<keyword id="KW-0899">Viral immunoevasion</keyword>
<proteinExistence type="inferred from homology"/>
<gene>
    <name evidence="1" type="primary">NS</name>
</gene>
<evidence type="ECO:0000255" key="1">
    <source>
        <dbReference type="HAMAP-Rule" id="MF_04066"/>
    </source>
</evidence>
<evidence type="ECO:0000256" key="2">
    <source>
        <dbReference type="SAM" id="MobiDB-lite"/>
    </source>
</evidence>
<protein>
    <recommendedName>
        <fullName evidence="1">Non-structural protein 1</fullName>
        <shortName evidence="1">NS1</shortName>
    </recommendedName>
    <alternativeName>
        <fullName evidence="1">NS1A</fullName>
    </alternativeName>
</protein>
<organismHost>
    <name type="scientific">Aves</name>
    <dbReference type="NCBI Taxonomy" id="8782"/>
</organismHost>
<organismHost>
    <name type="scientific">Cetacea</name>
    <name type="common">whales</name>
    <dbReference type="NCBI Taxonomy" id="9721"/>
</organismHost>
<organismHost>
    <name type="scientific">Homo sapiens</name>
    <name type="common">Human</name>
    <dbReference type="NCBI Taxonomy" id="9606"/>
</organismHost>
<organismHost>
    <name type="scientific">Phocidae</name>
    <name type="common">true seals</name>
    <dbReference type="NCBI Taxonomy" id="9709"/>
</organismHost>
<organismHost>
    <name type="scientific">Sus scrofa</name>
    <name type="common">Pig</name>
    <dbReference type="NCBI Taxonomy" id="9823"/>
</organismHost>
<feature type="chain" id="PRO_0000324261" description="Non-structural protein 1">
    <location>
        <begin position="1"/>
        <end position="237"/>
    </location>
</feature>
<feature type="region of interest" description="RNA-binding and homodimerization" evidence="1">
    <location>
        <begin position="1"/>
        <end position="73"/>
    </location>
</feature>
<feature type="region of interest" description="CPSF4-binding" evidence="1">
    <location>
        <begin position="180"/>
        <end position="215"/>
    </location>
</feature>
<feature type="region of interest" description="Disordered" evidence="2">
    <location>
        <begin position="205"/>
        <end position="237"/>
    </location>
</feature>
<feature type="region of interest" description="PABPN1-binding" evidence="1">
    <location>
        <begin position="223"/>
        <end position="230"/>
    </location>
</feature>
<feature type="short sequence motif" description="Nuclear localization signal" evidence="1">
    <location>
        <begin position="34"/>
        <end position="38"/>
    </location>
</feature>
<feature type="short sequence motif" description="Nuclear export signal" evidence="1">
    <location>
        <begin position="137"/>
        <end position="146"/>
    </location>
</feature>
<feature type="compositionally biased region" description="Basic residues" evidence="2">
    <location>
        <begin position="217"/>
        <end position="237"/>
    </location>
</feature>